<dbReference type="EC" id="2.7.7.-"/>
<dbReference type="EC" id="3.1.21.-"/>
<dbReference type="EMBL" id="X70418">
    <property type="protein sequence ID" value="CAA49856.1"/>
    <property type="molecule type" value="Genomic_DNA"/>
</dbReference>
<dbReference type="PIR" id="JQ2300">
    <property type="entry name" value="JQ2300"/>
</dbReference>
<dbReference type="PIR" id="S31875">
    <property type="entry name" value="S31875"/>
</dbReference>
<dbReference type="RefSeq" id="NP_040324.1">
    <property type="nucleotide sequence ID" value="NC_001359.1"/>
</dbReference>
<dbReference type="SMR" id="Q06923"/>
<dbReference type="GeneID" id="988144"/>
<dbReference type="KEGG" id="vg:988144"/>
<dbReference type="OrthoDB" id="9195at10239"/>
<dbReference type="Proteomes" id="UP000002321">
    <property type="component" value="Genome"/>
</dbReference>
<dbReference type="GO" id="GO:0042025">
    <property type="term" value="C:host cell nucleus"/>
    <property type="evidence" value="ECO:0007669"/>
    <property type="project" value="UniProtKB-SubCell"/>
</dbReference>
<dbReference type="GO" id="GO:0005524">
    <property type="term" value="F:ATP binding"/>
    <property type="evidence" value="ECO:0007669"/>
    <property type="project" value="UniProtKB-KW"/>
</dbReference>
<dbReference type="GO" id="GO:0003677">
    <property type="term" value="F:DNA binding"/>
    <property type="evidence" value="ECO:0007669"/>
    <property type="project" value="UniProtKB-KW"/>
</dbReference>
<dbReference type="GO" id="GO:0016888">
    <property type="term" value="F:endodeoxyribonuclease activity, producing 5'-phosphomonoesters"/>
    <property type="evidence" value="ECO:0007669"/>
    <property type="project" value="InterPro"/>
</dbReference>
<dbReference type="GO" id="GO:0004386">
    <property type="term" value="F:helicase activity"/>
    <property type="evidence" value="ECO:0007669"/>
    <property type="project" value="UniProtKB-KW"/>
</dbReference>
<dbReference type="GO" id="GO:0046872">
    <property type="term" value="F:metal ion binding"/>
    <property type="evidence" value="ECO:0007669"/>
    <property type="project" value="UniProtKB-KW"/>
</dbReference>
<dbReference type="GO" id="GO:0016779">
    <property type="term" value="F:nucleotidyltransferase activity"/>
    <property type="evidence" value="ECO:0007669"/>
    <property type="project" value="UniProtKB-KW"/>
</dbReference>
<dbReference type="GO" id="GO:0005198">
    <property type="term" value="F:structural molecule activity"/>
    <property type="evidence" value="ECO:0007669"/>
    <property type="project" value="InterPro"/>
</dbReference>
<dbReference type="GO" id="GO:0006260">
    <property type="term" value="P:DNA replication"/>
    <property type="evidence" value="ECO:0007669"/>
    <property type="project" value="UniProtKB-KW"/>
</dbReference>
<dbReference type="FunFam" id="3.40.1310.20:FF:000001">
    <property type="entry name" value="Replication-associated protein"/>
    <property type="match status" value="1"/>
</dbReference>
<dbReference type="Gene3D" id="3.40.1310.20">
    <property type="match status" value="1"/>
</dbReference>
<dbReference type="InterPro" id="IPR049912">
    <property type="entry name" value="CRESS_DNA_REP"/>
</dbReference>
<dbReference type="InterPro" id="IPR001301">
    <property type="entry name" value="Gemini_AL1_CLV"/>
</dbReference>
<dbReference type="InterPro" id="IPR001191">
    <property type="entry name" value="Gemini_AL1_REP"/>
</dbReference>
<dbReference type="InterPro" id="IPR022692">
    <property type="entry name" value="Gemini_AL1_REP_central"/>
</dbReference>
<dbReference type="Pfam" id="PF00799">
    <property type="entry name" value="Gemini_AL1"/>
    <property type="match status" value="1"/>
</dbReference>
<dbReference type="Pfam" id="PF08283">
    <property type="entry name" value="Gemini_AL1_M"/>
    <property type="match status" value="1"/>
</dbReference>
<dbReference type="PRINTS" id="PR00227">
    <property type="entry name" value="GEMCOATAL1"/>
</dbReference>
<dbReference type="PRINTS" id="PR00228">
    <property type="entry name" value="GEMCOATCLVL1"/>
</dbReference>
<dbReference type="SUPFAM" id="SSF55464">
    <property type="entry name" value="Origin of replication-binding domain, RBD-like"/>
    <property type="match status" value="1"/>
</dbReference>
<dbReference type="PROSITE" id="PS52020">
    <property type="entry name" value="CRESS_DNA_REP"/>
    <property type="match status" value="1"/>
</dbReference>
<proteinExistence type="inferred from homology"/>
<sequence>MPLPKRFRLNAKNYFLTYPQCSISKEERLAQLQNLSTPVNKKYIKICKESHEDGQPHLHVLIQFEGKYQCTNNRFFDLVSSTRSAHFHPNIQGAKSSSDVKTYIDKDGDTVEWGEFQIDGRSARGGQQSANDTYAKALNSASAEEALQIIKEEQPQHFFLQFHNIVSNANRIFQTPPEPWVPPFQQASFNNVPAIMTQWVSDNVCDAAARPMRPLSLVVEGPSRTGKTLWARSLGPHNYICGHMDLSPKIYSNNAWYNVIDDIPPHYVKHFKEFMGAQRDWQSNCKYGKPIQIKGGIPTIFLCNPGPQSSYKDYLSEEKNRSLNDWVQKNAIYVTIEEAIFTTGSQTSP</sequence>
<protein>
    <recommendedName>
        <fullName>Replication-associated protein</fullName>
        <shortName>Rep</shortName>
        <ecNumber>2.7.7.-</ecNumber>
        <ecNumber>3.1.21.-</ecNumber>
    </recommendedName>
    <alternativeName>
        <fullName>Protein AC1</fullName>
    </alternativeName>
    <alternativeName>
        <fullName>Protein AL1</fullName>
    </alternativeName>
</protein>
<feature type="chain" id="PRO_0000222210" description="Replication-associated protein">
    <location>
        <begin position="1"/>
        <end position="349"/>
    </location>
</feature>
<feature type="domain" description="CRESS-DNA virus Rep endonuclease" evidence="2">
    <location>
        <begin position="8"/>
        <end position="116"/>
    </location>
</feature>
<feature type="region of interest" description="Binding to RBR1" evidence="1">
    <location>
        <begin position="143"/>
        <end position="153"/>
    </location>
</feature>
<feature type="region of interest" description="Oligomerization" evidence="1">
    <location>
        <begin position="156"/>
        <end position="176"/>
    </location>
</feature>
<feature type="short sequence motif" description="RCR-1" evidence="2">
    <location>
        <begin position="15"/>
        <end position="18"/>
    </location>
</feature>
<feature type="short sequence motif" description="RCR-2" evidence="2">
    <location>
        <begin position="57"/>
        <end position="59"/>
    </location>
</feature>
<feature type="short sequence motif" description="RCR-3" evidence="2">
    <location>
        <begin position="103"/>
        <end position="106"/>
    </location>
</feature>
<feature type="active site" description="For DNA cleavage activity" evidence="2">
    <location>
        <position position="103"/>
    </location>
</feature>
<feature type="binding site" evidence="2">
    <location>
        <position position="49"/>
    </location>
    <ligand>
        <name>a divalent metal cation</name>
        <dbReference type="ChEBI" id="CHEBI:60240"/>
    </ligand>
</feature>
<feature type="binding site" evidence="2">
    <location>
        <position position="57"/>
    </location>
    <ligand>
        <name>a divalent metal cation</name>
        <dbReference type="ChEBI" id="CHEBI:60240"/>
    </ligand>
</feature>
<feature type="binding site" evidence="2">
    <location>
        <position position="59"/>
    </location>
    <ligand>
        <name>a divalent metal cation</name>
        <dbReference type="ChEBI" id="CHEBI:60240"/>
    </ligand>
</feature>
<feature type="binding site" evidence="2">
    <location>
        <position position="107"/>
    </location>
    <ligand>
        <name>a divalent metal cation</name>
        <dbReference type="ChEBI" id="CHEBI:60240"/>
    </ligand>
</feature>
<feature type="binding site" evidence="1">
    <location>
        <begin position="221"/>
        <end position="228"/>
    </location>
    <ligand>
        <name>ATP</name>
        <dbReference type="ChEBI" id="CHEBI:30616"/>
    </ligand>
</feature>
<comment type="function">
    <text evidence="1">Essential for the replication of viral ssDNA. The closed circular ssDNA genome is first converted to a superhelical dsDNA. Rep binds a specific region at the genome origin of replication. It introduces an endonucleolytic nick within the conserved sequence 5'-TAATATTAC-3' in the intergenic region of the genome present in all geminiviruses, thereby initiating the rolling circle replication (RCR). Following cleavage, binds covalently to the 5'-phosphate of DNA as a tyrosyl ester. The cleavage gives rise to a free 3'-OH that serves as a primer for the cellular DNA polymerase. The polymerase synthesizes the (+) strand DNA by rolling circle mechanism. After one round of replication, a Rep-catalyzed nucleotidyl transfer reaction releases a circular single-stranded virus genome, thereby terminating the replication. Displays origin-specific DNA cleavage, nucleotidyl transferase, ATPase and helicase activities (By similarity).</text>
</comment>
<comment type="cofactor">
    <cofactor evidence="2">
        <name>Mg(2+)</name>
        <dbReference type="ChEBI" id="CHEBI:18420"/>
    </cofactor>
    <cofactor evidence="2">
        <name>Mn(2+)</name>
        <dbReference type="ChEBI" id="CHEBI:29035"/>
    </cofactor>
    <text evidence="2">Divalent metal cations, possibly Mg(2+) or Mn(2+).</text>
</comment>
<comment type="subunit">
    <text evidence="1">Homooligomer. Interacts with the replication enhancer protein (REn). Interacts with host retinoblastoma-related protein 1 (RBR1), and may thereby induce the transcription of host replicative enzymes even if the cell is not dividing anymore. Interacts with host PCNA. Interacts with host SCE1 protein (By similarity).</text>
</comment>
<comment type="subcellular location">
    <subcellularLocation>
        <location evidence="1">Host nucleus</location>
    </subcellularLocation>
</comment>
<comment type="domain">
    <text evidence="1">There are 3 rolling circle replication (RCR) motifs. RCR-2 is probably involved in metal coordination. RCR-3 is required for phosphodiester bond cleavage for initiation of RCR (By similarity).</text>
</comment>
<comment type="similarity">
    <text evidence="3">Belongs to the geminiviridae Rep protein family.</text>
</comment>
<name>REP_PHUV</name>
<organismHost>
    <name type="scientific">Capsicum annuum</name>
    <name type="common">Capsicum pepper</name>
    <dbReference type="NCBI Taxonomy" id="4072"/>
</organismHost>
<gene>
    <name type="ORF">AC1</name>
    <name type="ORF">AL1</name>
</gene>
<accession>Q06923</accession>
<organism>
    <name type="scientific">Pepper huasteco yellow vein virus</name>
    <name type="common">PHYVV</name>
    <name type="synonym">Pepper huasteco virus</name>
    <dbReference type="NCBI Taxonomy" id="223303"/>
    <lineage>
        <taxon>Viruses</taxon>
        <taxon>Monodnaviria</taxon>
        <taxon>Shotokuvirae</taxon>
        <taxon>Cressdnaviricota</taxon>
        <taxon>Repensiviricetes</taxon>
        <taxon>Geplafuvirales</taxon>
        <taxon>Geminiviridae</taxon>
        <taxon>Begomovirus</taxon>
    </lineage>
</organism>
<keyword id="KW-0067">ATP-binding</keyword>
<keyword id="KW-0190">Covalent protein-DNA linkage</keyword>
<keyword id="KW-0235">DNA replication</keyword>
<keyword id="KW-0238">DNA-binding</keyword>
<keyword id="KW-0255">Endonuclease</keyword>
<keyword id="KW-0347">Helicase</keyword>
<keyword id="KW-1048">Host nucleus</keyword>
<keyword id="KW-0945">Host-virus interaction</keyword>
<keyword id="KW-0378">Hydrolase</keyword>
<keyword id="KW-0479">Metal-binding</keyword>
<keyword id="KW-0511">Multifunctional enzyme</keyword>
<keyword id="KW-0540">Nuclease</keyword>
<keyword id="KW-0547">Nucleotide-binding</keyword>
<keyword id="KW-0548">Nucleotidyltransferase</keyword>
<keyword id="KW-1185">Reference proteome</keyword>
<keyword id="KW-0808">Transferase</keyword>
<reference key="1">
    <citation type="journal article" date="1993" name="J. Gen. Virol.">
        <title>Complete nucleotide sequence of pepper huasteco virus: analysis and comparison with bipartite geminiviruses.</title>
        <authorList>
            <person name="Torres-Pacheco I."/>
            <person name="Garzon-Tiznado J.A."/>
            <person name="Herrera-Estrella L."/>
            <person name="Rivera-Bustamante R.F."/>
        </authorList>
    </citation>
    <scope>NUCLEOTIDE SEQUENCE [GENOMIC DNA]</scope>
</reference>
<evidence type="ECO:0000250" key="1"/>
<evidence type="ECO:0000255" key="2">
    <source>
        <dbReference type="PROSITE-ProRule" id="PRU01364"/>
    </source>
</evidence>
<evidence type="ECO:0000305" key="3"/>